<feature type="chain" id="PRO_0000217618" description="Photosystem I assembly protein Ycf4">
    <location>
        <begin position="1"/>
        <end position="185"/>
    </location>
</feature>
<feature type="transmembrane region" description="Helical" evidence="1">
    <location>
        <begin position="20"/>
        <end position="40"/>
    </location>
</feature>
<feature type="transmembrane region" description="Helical" evidence="1">
    <location>
        <begin position="57"/>
        <end position="77"/>
    </location>
</feature>
<accession>Q6ENG3</accession>
<sequence>MNWRSEHIWIELLKGSRKRGNFFWACILFLGSLGFLAVGASSYLGKNIISVLPSQQILFFPQGVVMSFYGIAGLFISAYLWCTILWNVGSGYDRFDRKEGVVCIFRWGFPGIKRRVFLRFLMRDIQSIRIQVKEGLFPRRILYMEIRGQGAIPLTRTDEKFFTPREIEQKAAELAYFLRIPMEVF</sequence>
<organism>
    <name type="scientific">Oryza nivara</name>
    <name type="common">Indian wild rice</name>
    <name type="synonym">Oryza sativa f. spontanea</name>
    <dbReference type="NCBI Taxonomy" id="4536"/>
    <lineage>
        <taxon>Eukaryota</taxon>
        <taxon>Viridiplantae</taxon>
        <taxon>Streptophyta</taxon>
        <taxon>Embryophyta</taxon>
        <taxon>Tracheophyta</taxon>
        <taxon>Spermatophyta</taxon>
        <taxon>Magnoliopsida</taxon>
        <taxon>Liliopsida</taxon>
        <taxon>Poales</taxon>
        <taxon>Poaceae</taxon>
        <taxon>BOP clade</taxon>
        <taxon>Oryzoideae</taxon>
        <taxon>Oryzeae</taxon>
        <taxon>Oryzinae</taxon>
        <taxon>Oryza</taxon>
    </lineage>
</organism>
<geneLocation type="chloroplast"/>
<keyword id="KW-0150">Chloroplast</keyword>
<keyword id="KW-0472">Membrane</keyword>
<keyword id="KW-0602">Photosynthesis</keyword>
<keyword id="KW-0934">Plastid</keyword>
<keyword id="KW-1185">Reference proteome</keyword>
<keyword id="KW-0793">Thylakoid</keyword>
<keyword id="KW-0812">Transmembrane</keyword>
<keyword id="KW-1133">Transmembrane helix</keyword>
<reference key="1">
    <citation type="journal article" date="2004" name="Gene">
        <title>The complete nucleotide sequence of wild rice (Oryza nivara) chloroplast genome: first genome wide comparative sequence analysis of wild and cultivated rice.</title>
        <authorList>
            <person name="Masood M.S."/>
            <person name="Nishikawa T."/>
            <person name="Fukuoka S."/>
            <person name="Njenga P.K."/>
            <person name="Tsudzuki T."/>
            <person name="Kadowaki K."/>
        </authorList>
    </citation>
    <scope>NUCLEOTIDE SEQUENCE [LARGE SCALE GENOMIC DNA]</scope>
    <source>
        <strain evidence="2">cv. SL10</strain>
    </source>
</reference>
<name>YCF4_ORYNI</name>
<proteinExistence type="inferred from homology"/>
<comment type="function">
    <text evidence="1">Seems to be required for the assembly of the photosystem I complex.</text>
</comment>
<comment type="subcellular location">
    <subcellularLocation>
        <location evidence="1">Plastid</location>
        <location evidence="1">Chloroplast thylakoid membrane</location>
        <topology evidence="1">Multi-pass membrane protein</topology>
    </subcellularLocation>
</comment>
<comment type="similarity">
    <text evidence="1">Belongs to the Ycf4 family.</text>
</comment>
<dbReference type="EMBL" id="AP006728">
    <property type="protein sequence ID" value="BAD26789.1"/>
    <property type="molecule type" value="Genomic_DNA"/>
</dbReference>
<dbReference type="RefSeq" id="YP_052760.1">
    <property type="nucleotide sequence ID" value="NC_005973.1"/>
</dbReference>
<dbReference type="STRING" id="4536.Q6ENG3"/>
<dbReference type="GeneID" id="2885905"/>
<dbReference type="eggNOG" id="ENOG502QWGG">
    <property type="taxonomic scope" value="Eukaryota"/>
</dbReference>
<dbReference type="Proteomes" id="UP000006591">
    <property type="component" value="Chloroplast"/>
</dbReference>
<dbReference type="GO" id="GO:0009535">
    <property type="term" value="C:chloroplast thylakoid membrane"/>
    <property type="evidence" value="ECO:0007669"/>
    <property type="project" value="UniProtKB-SubCell"/>
</dbReference>
<dbReference type="GO" id="GO:0009522">
    <property type="term" value="C:photosystem I"/>
    <property type="evidence" value="ECO:0007669"/>
    <property type="project" value="InterPro"/>
</dbReference>
<dbReference type="GO" id="GO:0009536">
    <property type="term" value="C:plastid"/>
    <property type="evidence" value="ECO:0000305"/>
    <property type="project" value="Gramene"/>
</dbReference>
<dbReference type="GO" id="GO:0015979">
    <property type="term" value="P:photosynthesis"/>
    <property type="evidence" value="ECO:0007669"/>
    <property type="project" value="UniProtKB-UniRule"/>
</dbReference>
<dbReference type="HAMAP" id="MF_00437">
    <property type="entry name" value="Ycf4"/>
    <property type="match status" value="1"/>
</dbReference>
<dbReference type="InterPro" id="IPR003359">
    <property type="entry name" value="PSI_Ycf4_assembly"/>
</dbReference>
<dbReference type="PANTHER" id="PTHR33288">
    <property type="match status" value="1"/>
</dbReference>
<dbReference type="PANTHER" id="PTHR33288:SF4">
    <property type="entry name" value="PHOTOSYSTEM I ASSEMBLY PROTEIN YCF4"/>
    <property type="match status" value="1"/>
</dbReference>
<dbReference type="Pfam" id="PF02392">
    <property type="entry name" value="Ycf4"/>
    <property type="match status" value="1"/>
</dbReference>
<evidence type="ECO:0000255" key="1">
    <source>
        <dbReference type="HAMAP-Rule" id="MF_00437"/>
    </source>
</evidence>
<evidence type="ECO:0000312" key="2">
    <source>
        <dbReference type="Proteomes" id="UP000006591"/>
    </source>
</evidence>
<gene>
    <name evidence="1" type="primary">ycf4</name>
</gene>
<protein>
    <recommendedName>
        <fullName evidence="1">Photosystem I assembly protein Ycf4</fullName>
    </recommendedName>
</protein>